<comment type="subcellular location">
    <subcellularLocation>
        <location evidence="4">Membrane</location>
        <topology evidence="4">Single-pass membrane protein</topology>
    </subcellularLocation>
</comment>
<comment type="PTM">
    <text evidence="5">O-mannosylated.</text>
</comment>
<keyword id="KW-0325">Glycoprotein</keyword>
<keyword id="KW-0472">Membrane</keyword>
<keyword id="KW-0597">Phosphoprotein</keyword>
<keyword id="KW-1185">Reference proteome</keyword>
<keyword id="KW-0732">Signal</keyword>
<keyword id="KW-0812">Transmembrane</keyword>
<keyword id="KW-1133">Transmembrane helix</keyword>
<gene>
    <name type="primary">wsc1</name>
    <name type="ORF">SPBC30B4.01c</name>
    <name type="ORF">SPBC3D6.14c</name>
</gene>
<dbReference type="EMBL" id="CU329671">
    <property type="protein sequence ID" value="CAB09116.2"/>
    <property type="molecule type" value="Genomic_DNA"/>
</dbReference>
<dbReference type="EMBL" id="AB027834">
    <property type="protein sequence ID" value="BAA87138.1"/>
    <property type="molecule type" value="Genomic_DNA"/>
</dbReference>
<dbReference type="EMBL" id="AB027890">
    <property type="protein sequence ID" value="BAA87194.1"/>
    <property type="molecule type" value="Genomic_DNA"/>
</dbReference>
<dbReference type="PIR" id="T40167">
    <property type="entry name" value="T40167"/>
</dbReference>
<dbReference type="RefSeq" id="NP_595526.2">
    <property type="nucleotide sequence ID" value="NM_001021435.3"/>
</dbReference>
<dbReference type="SMR" id="P87179"/>
<dbReference type="BioGRID" id="277485">
    <property type="interactions" value="7"/>
</dbReference>
<dbReference type="FunCoup" id="P87179">
    <property type="interactions" value="80"/>
</dbReference>
<dbReference type="STRING" id="284812.P87179"/>
<dbReference type="GlyCosmos" id="P87179">
    <property type="glycosylation" value="2 sites, No reported glycans"/>
</dbReference>
<dbReference type="iPTMnet" id="P87179"/>
<dbReference type="PaxDb" id="4896-SPBC30B4.01c.1"/>
<dbReference type="EnsemblFungi" id="SPBC30B4.01c.1">
    <property type="protein sequence ID" value="SPBC30B4.01c.1:pep"/>
    <property type="gene ID" value="SPBC30B4.01c"/>
</dbReference>
<dbReference type="GeneID" id="2540969"/>
<dbReference type="KEGG" id="spo:2540969"/>
<dbReference type="PomBase" id="SPBC30B4.01c">
    <property type="gene designation" value="wsc1"/>
</dbReference>
<dbReference type="VEuPathDB" id="FungiDB:SPBC30B4.01c"/>
<dbReference type="eggNOG" id="KOG4157">
    <property type="taxonomic scope" value="Eukaryota"/>
</dbReference>
<dbReference type="HOGENOM" id="CLU_024893_0_1_1"/>
<dbReference type="InParanoid" id="P87179"/>
<dbReference type="OMA" id="MTSIGCF"/>
<dbReference type="PRO" id="PR:P87179"/>
<dbReference type="Proteomes" id="UP000002485">
    <property type="component" value="Chromosome II"/>
</dbReference>
<dbReference type="GO" id="GO:0005886">
    <property type="term" value="C:plasma membrane"/>
    <property type="evidence" value="ECO:0000314"/>
    <property type="project" value="PomBase"/>
</dbReference>
<dbReference type="GO" id="GO:0031520">
    <property type="term" value="C:plasma membrane of cell tip"/>
    <property type="evidence" value="ECO:0000314"/>
    <property type="project" value="PomBase"/>
</dbReference>
<dbReference type="GO" id="GO:0140897">
    <property type="term" value="F:mechanoreceptor activity"/>
    <property type="evidence" value="ECO:0000269"/>
    <property type="project" value="PomBase"/>
</dbReference>
<dbReference type="GO" id="GO:0007166">
    <property type="term" value="P:cell surface receptor signaling pathway"/>
    <property type="evidence" value="ECO:0000305"/>
    <property type="project" value="PomBase"/>
</dbReference>
<dbReference type="GO" id="GO:0050982">
    <property type="term" value="P:detection of mechanical stimulus"/>
    <property type="evidence" value="ECO:0000269"/>
    <property type="project" value="PomBase"/>
</dbReference>
<dbReference type="GO" id="GO:0035556">
    <property type="term" value="P:intracellular signal transduction"/>
    <property type="evidence" value="ECO:0000266"/>
    <property type="project" value="PomBase"/>
</dbReference>
<dbReference type="GO" id="GO:1903338">
    <property type="term" value="P:regulation of cell wall organization or biogenesis"/>
    <property type="evidence" value="ECO:0000269"/>
    <property type="project" value="PomBase"/>
</dbReference>
<dbReference type="InterPro" id="IPR051836">
    <property type="entry name" value="Kremen_rcpt"/>
</dbReference>
<dbReference type="InterPro" id="IPR002889">
    <property type="entry name" value="WSC_carb-bd"/>
</dbReference>
<dbReference type="PANTHER" id="PTHR24269">
    <property type="entry name" value="KREMEN PROTEIN"/>
    <property type="match status" value="1"/>
</dbReference>
<dbReference type="PANTHER" id="PTHR24269:SF16">
    <property type="entry name" value="PROTEIN SLG1"/>
    <property type="match status" value="1"/>
</dbReference>
<dbReference type="Pfam" id="PF01822">
    <property type="entry name" value="WSC"/>
    <property type="match status" value="1"/>
</dbReference>
<dbReference type="SMART" id="SM00321">
    <property type="entry name" value="WSC"/>
    <property type="match status" value="1"/>
</dbReference>
<dbReference type="PROSITE" id="PS51212">
    <property type="entry name" value="WSC"/>
    <property type="match status" value="1"/>
</dbReference>
<sequence>MVFLNSSPFKGRLLFFVYLLIISTRLVAADMNTQYGCYLVDSSLTEQGTFTYLDPAYCYNNICGGSDNIAFVAIRNNQCYCGSTLTATEVSSSLCTTPCPGYGSLMCGGDLYWSVYLTGNGVLQTTVSSSSVSSTTSSSSSSSPSSSSTTTTTSPSSSSSSSSSSSSSSSSSSSSSSSSSSSSSSSSSSSSSSSSSSSSSSSSSSSSVPITSSTSSSHSSSSSSSSSSSSSSRPSSSSSFITTMSSSTFISTVTVTPSSSSSSTSSEVPSSTAALALNASKASNHTSLNAGAIVGIVIGCVAFAVVMALCIFLYFYFRRFKIRMSDSANEGKYPSYASELDSRLDPAMMNRKSSESLADSQDYSRKILRVTNLN</sequence>
<accession>P87179</accession>
<accession>Q9USB7</accession>
<accession>Q9USD8</accession>
<proteinExistence type="evidence at protein level"/>
<feature type="signal peptide" evidence="1">
    <location>
        <begin position="1"/>
        <end position="29"/>
    </location>
</feature>
<feature type="chain" id="PRO_0000041487" description="Cell wall integrity and stress response component 1">
    <location>
        <begin position="30"/>
        <end position="374"/>
    </location>
</feature>
<feature type="topological domain" description="Extracellular" evidence="1">
    <location>
        <begin position="30"/>
        <end position="292"/>
    </location>
</feature>
<feature type="transmembrane region" description="Helical" evidence="1">
    <location>
        <begin position="293"/>
        <end position="313"/>
    </location>
</feature>
<feature type="topological domain" description="Cytoplasmic" evidence="1">
    <location>
        <begin position="314"/>
        <end position="374"/>
    </location>
</feature>
<feature type="domain" description="WSC" evidence="2">
    <location>
        <begin position="31"/>
        <end position="119"/>
    </location>
</feature>
<feature type="region of interest" description="Disordered" evidence="3">
    <location>
        <begin position="132"/>
        <end position="236"/>
    </location>
</feature>
<feature type="modified residue" description="Phosphoserine" evidence="6">
    <location>
        <position position="354"/>
    </location>
</feature>
<feature type="glycosylation site" description="N-linked (GlcNAc...) asparagine" evidence="1">
    <location>
        <position position="278"/>
    </location>
</feature>
<feature type="glycosylation site" description="N-linked (GlcNAc...) asparagine" evidence="1">
    <location>
        <position position="284"/>
    </location>
</feature>
<organism>
    <name type="scientific">Schizosaccharomyces pombe (strain 972 / ATCC 24843)</name>
    <name type="common">Fission yeast</name>
    <dbReference type="NCBI Taxonomy" id="284812"/>
    <lineage>
        <taxon>Eukaryota</taxon>
        <taxon>Fungi</taxon>
        <taxon>Dikarya</taxon>
        <taxon>Ascomycota</taxon>
        <taxon>Taphrinomycotina</taxon>
        <taxon>Schizosaccharomycetes</taxon>
        <taxon>Schizosaccharomycetales</taxon>
        <taxon>Schizosaccharomycetaceae</taxon>
        <taxon>Schizosaccharomyces</taxon>
    </lineage>
</organism>
<protein>
    <recommendedName>
        <fullName>Cell wall integrity and stress response component 1</fullName>
    </recommendedName>
</protein>
<reference key="1">
    <citation type="journal article" date="2002" name="Nature">
        <title>The genome sequence of Schizosaccharomyces pombe.</title>
        <authorList>
            <person name="Wood V."/>
            <person name="Gwilliam R."/>
            <person name="Rajandream M.A."/>
            <person name="Lyne M.H."/>
            <person name="Lyne R."/>
            <person name="Stewart A."/>
            <person name="Sgouros J.G."/>
            <person name="Peat N."/>
            <person name="Hayles J."/>
            <person name="Baker S.G."/>
            <person name="Basham D."/>
            <person name="Bowman S."/>
            <person name="Brooks K."/>
            <person name="Brown D."/>
            <person name="Brown S."/>
            <person name="Chillingworth T."/>
            <person name="Churcher C.M."/>
            <person name="Collins M."/>
            <person name="Connor R."/>
            <person name="Cronin A."/>
            <person name="Davis P."/>
            <person name="Feltwell T."/>
            <person name="Fraser A."/>
            <person name="Gentles S."/>
            <person name="Goble A."/>
            <person name="Hamlin N."/>
            <person name="Harris D.E."/>
            <person name="Hidalgo J."/>
            <person name="Hodgson G."/>
            <person name="Holroyd S."/>
            <person name="Hornsby T."/>
            <person name="Howarth S."/>
            <person name="Huckle E.J."/>
            <person name="Hunt S."/>
            <person name="Jagels K."/>
            <person name="James K.D."/>
            <person name="Jones L."/>
            <person name="Jones M."/>
            <person name="Leather S."/>
            <person name="McDonald S."/>
            <person name="McLean J."/>
            <person name="Mooney P."/>
            <person name="Moule S."/>
            <person name="Mungall K.L."/>
            <person name="Murphy L.D."/>
            <person name="Niblett D."/>
            <person name="Odell C."/>
            <person name="Oliver K."/>
            <person name="O'Neil S."/>
            <person name="Pearson D."/>
            <person name="Quail M.A."/>
            <person name="Rabbinowitsch E."/>
            <person name="Rutherford K.M."/>
            <person name="Rutter S."/>
            <person name="Saunders D."/>
            <person name="Seeger K."/>
            <person name="Sharp S."/>
            <person name="Skelton J."/>
            <person name="Simmonds M.N."/>
            <person name="Squares R."/>
            <person name="Squares S."/>
            <person name="Stevens K."/>
            <person name="Taylor K."/>
            <person name="Taylor R.G."/>
            <person name="Tivey A."/>
            <person name="Walsh S.V."/>
            <person name="Warren T."/>
            <person name="Whitehead S."/>
            <person name="Woodward J.R."/>
            <person name="Volckaert G."/>
            <person name="Aert R."/>
            <person name="Robben J."/>
            <person name="Grymonprez B."/>
            <person name="Weltjens I."/>
            <person name="Vanstreels E."/>
            <person name="Rieger M."/>
            <person name="Schaefer M."/>
            <person name="Mueller-Auer S."/>
            <person name="Gabel C."/>
            <person name="Fuchs M."/>
            <person name="Duesterhoeft A."/>
            <person name="Fritzc C."/>
            <person name="Holzer E."/>
            <person name="Moestl D."/>
            <person name="Hilbert H."/>
            <person name="Borzym K."/>
            <person name="Langer I."/>
            <person name="Beck A."/>
            <person name="Lehrach H."/>
            <person name="Reinhardt R."/>
            <person name="Pohl T.M."/>
            <person name="Eger P."/>
            <person name="Zimmermann W."/>
            <person name="Wedler H."/>
            <person name="Wambutt R."/>
            <person name="Purnelle B."/>
            <person name="Goffeau A."/>
            <person name="Cadieu E."/>
            <person name="Dreano S."/>
            <person name="Gloux S."/>
            <person name="Lelaure V."/>
            <person name="Mottier S."/>
            <person name="Galibert F."/>
            <person name="Aves S.J."/>
            <person name="Xiang Z."/>
            <person name="Hunt C."/>
            <person name="Moore K."/>
            <person name="Hurst S.M."/>
            <person name="Lucas M."/>
            <person name="Rochet M."/>
            <person name="Gaillardin C."/>
            <person name="Tallada V.A."/>
            <person name="Garzon A."/>
            <person name="Thode G."/>
            <person name="Daga R.R."/>
            <person name="Cruzado L."/>
            <person name="Jimenez J."/>
            <person name="Sanchez M."/>
            <person name="del Rey F."/>
            <person name="Benito J."/>
            <person name="Dominguez A."/>
            <person name="Revuelta J.L."/>
            <person name="Moreno S."/>
            <person name="Armstrong J."/>
            <person name="Forsburg S.L."/>
            <person name="Cerutti L."/>
            <person name="Lowe T."/>
            <person name="McCombie W.R."/>
            <person name="Paulsen I."/>
            <person name="Potashkin J."/>
            <person name="Shpakovski G.V."/>
            <person name="Ussery D."/>
            <person name="Barrell B.G."/>
            <person name="Nurse P."/>
        </authorList>
    </citation>
    <scope>NUCLEOTIDE SEQUENCE [LARGE SCALE GENOMIC DNA]</scope>
    <source>
        <strain>972 / ATCC 24843</strain>
    </source>
</reference>
<reference key="2">
    <citation type="journal article" date="2000" name="Genes Cells">
        <title>Large-scale screening of intracellular protein localization in living fission yeast cells by the use of a GFP-fusion genomic DNA library.</title>
        <authorList>
            <person name="Ding D.-Q."/>
            <person name="Tomita Y."/>
            <person name="Yamamoto A."/>
            <person name="Chikashige Y."/>
            <person name="Haraguchi T."/>
            <person name="Hiraoka Y."/>
        </authorList>
    </citation>
    <scope>NUCLEOTIDE SEQUENCE [LARGE SCALE GENOMIC DNA] OF 31-66 AND 136-345</scope>
    <scope>SUBCELLULAR LOCATION</scope>
    <source>
        <strain>ATCC 38364 / 968</strain>
    </source>
</reference>
<reference key="3">
    <citation type="journal article" date="2005" name="Mol. Microbiol.">
        <title>Protein O-mannosylation is crucial for cell wall integrity, septation and viability in fission yeast.</title>
        <authorList>
            <person name="Willer T."/>
            <person name="Brandl M."/>
            <person name="Sipiczki M."/>
            <person name="Strahl S."/>
        </authorList>
    </citation>
    <scope>O-MANNOSYLATION</scope>
</reference>
<reference key="4">
    <citation type="journal article" date="2008" name="J. Proteome Res.">
        <title>Phosphoproteome analysis of fission yeast.</title>
        <authorList>
            <person name="Wilson-Grady J.T."/>
            <person name="Villen J."/>
            <person name="Gygi S.P."/>
        </authorList>
    </citation>
    <scope>PHOSPHORYLATION [LARGE SCALE ANALYSIS] AT SER-354</scope>
    <scope>IDENTIFICATION BY MASS SPECTROMETRY</scope>
</reference>
<evidence type="ECO:0000255" key="1"/>
<evidence type="ECO:0000255" key="2">
    <source>
        <dbReference type="PROSITE-ProRule" id="PRU00558"/>
    </source>
</evidence>
<evidence type="ECO:0000256" key="3">
    <source>
        <dbReference type="SAM" id="MobiDB-lite"/>
    </source>
</evidence>
<evidence type="ECO:0000269" key="4">
    <source>
    </source>
</evidence>
<evidence type="ECO:0000269" key="5">
    <source>
    </source>
</evidence>
<evidence type="ECO:0000269" key="6">
    <source>
    </source>
</evidence>
<name>WSC1_SCHPO</name>